<organism>
    <name type="scientific">Vibrio atlanticus (strain LGP32)</name>
    <name type="common">Vibrio splendidus (strain Mel32)</name>
    <dbReference type="NCBI Taxonomy" id="575788"/>
    <lineage>
        <taxon>Bacteria</taxon>
        <taxon>Pseudomonadati</taxon>
        <taxon>Pseudomonadota</taxon>
        <taxon>Gammaproteobacteria</taxon>
        <taxon>Vibrionales</taxon>
        <taxon>Vibrionaceae</taxon>
        <taxon>Vibrio</taxon>
    </lineage>
</organism>
<name>SUCC_VIBA3</name>
<proteinExistence type="inferred from homology"/>
<protein>
    <recommendedName>
        <fullName evidence="1">Succinate--CoA ligase [ADP-forming] subunit beta</fullName>
        <ecNumber evidence="1">6.2.1.5</ecNumber>
    </recommendedName>
    <alternativeName>
        <fullName evidence="1">Succinyl-CoA synthetase subunit beta</fullName>
        <shortName evidence="1">SCS-beta</shortName>
    </alternativeName>
</protein>
<dbReference type="EC" id="6.2.1.5" evidence="1"/>
<dbReference type="EMBL" id="FM954972">
    <property type="protein sequence ID" value="CAV19405.1"/>
    <property type="molecule type" value="Genomic_DNA"/>
</dbReference>
<dbReference type="SMR" id="B7VI35"/>
<dbReference type="STRING" id="575788.VS_2241"/>
<dbReference type="KEGG" id="vsp:VS_2241"/>
<dbReference type="PATRIC" id="fig|575788.5.peg.3503"/>
<dbReference type="eggNOG" id="COG0045">
    <property type="taxonomic scope" value="Bacteria"/>
</dbReference>
<dbReference type="HOGENOM" id="CLU_037430_0_2_6"/>
<dbReference type="UniPathway" id="UPA00223">
    <property type="reaction ID" value="UER00999"/>
</dbReference>
<dbReference type="Proteomes" id="UP000009100">
    <property type="component" value="Chromosome 1"/>
</dbReference>
<dbReference type="GO" id="GO:0005829">
    <property type="term" value="C:cytosol"/>
    <property type="evidence" value="ECO:0007669"/>
    <property type="project" value="TreeGrafter"/>
</dbReference>
<dbReference type="GO" id="GO:0042709">
    <property type="term" value="C:succinate-CoA ligase complex"/>
    <property type="evidence" value="ECO:0007669"/>
    <property type="project" value="TreeGrafter"/>
</dbReference>
<dbReference type="GO" id="GO:0005524">
    <property type="term" value="F:ATP binding"/>
    <property type="evidence" value="ECO:0007669"/>
    <property type="project" value="UniProtKB-UniRule"/>
</dbReference>
<dbReference type="GO" id="GO:0000287">
    <property type="term" value="F:magnesium ion binding"/>
    <property type="evidence" value="ECO:0007669"/>
    <property type="project" value="UniProtKB-UniRule"/>
</dbReference>
<dbReference type="GO" id="GO:0004775">
    <property type="term" value="F:succinate-CoA ligase (ADP-forming) activity"/>
    <property type="evidence" value="ECO:0007669"/>
    <property type="project" value="UniProtKB-UniRule"/>
</dbReference>
<dbReference type="GO" id="GO:0004776">
    <property type="term" value="F:succinate-CoA ligase (GDP-forming) activity"/>
    <property type="evidence" value="ECO:0007669"/>
    <property type="project" value="RHEA"/>
</dbReference>
<dbReference type="GO" id="GO:0006104">
    <property type="term" value="P:succinyl-CoA metabolic process"/>
    <property type="evidence" value="ECO:0007669"/>
    <property type="project" value="TreeGrafter"/>
</dbReference>
<dbReference type="GO" id="GO:0006099">
    <property type="term" value="P:tricarboxylic acid cycle"/>
    <property type="evidence" value="ECO:0007669"/>
    <property type="project" value="UniProtKB-UniRule"/>
</dbReference>
<dbReference type="FunFam" id="3.30.1490.20:FF:000002">
    <property type="entry name" value="Succinate--CoA ligase [ADP-forming] subunit beta"/>
    <property type="match status" value="1"/>
</dbReference>
<dbReference type="FunFam" id="3.30.470.20:FF:000002">
    <property type="entry name" value="Succinate--CoA ligase [ADP-forming] subunit beta"/>
    <property type="match status" value="1"/>
</dbReference>
<dbReference type="FunFam" id="3.40.50.261:FF:000001">
    <property type="entry name" value="Succinate--CoA ligase [ADP-forming] subunit beta"/>
    <property type="match status" value="1"/>
</dbReference>
<dbReference type="Gene3D" id="3.30.1490.20">
    <property type="entry name" value="ATP-grasp fold, A domain"/>
    <property type="match status" value="1"/>
</dbReference>
<dbReference type="Gene3D" id="3.30.470.20">
    <property type="entry name" value="ATP-grasp fold, B domain"/>
    <property type="match status" value="1"/>
</dbReference>
<dbReference type="Gene3D" id="3.40.50.261">
    <property type="entry name" value="Succinyl-CoA synthetase domains"/>
    <property type="match status" value="1"/>
</dbReference>
<dbReference type="HAMAP" id="MF_00558">
    <property type="entry name" value="Succ_CoA_beta"/>
    <property type="match status" value="1"/>
</dbReference>
<dbReference type="InterPro" id="IPR011761">
    <property type="entry name" value="ATP-grasp"/>
</dbReference>
<dbReference type="InterPro" id="IPR013650">
    <property type="entry name" value="ATP-grasp_succ-CoA_synth-type"/>
</dbReference>
<dbReference type="InterPro" id="IPR013815">
    <property type="entry name" value="ATP_grasp_subdomain_1"/>
</dbReference>
<dbReference type="InterPro" id="IPR017866">
    <property type="entry name" value="Succ-CoA_synthase_bsu_CS"/>
</dbReference>
<dbReference type="InterPro" id="IPR005811">
    <property type="entry name" value="SUCC_ACL_C"/>
</dbReference>
<dbReference type="InterPro" id="IPR005809">
    <property type="entry name" value="Succ_CoA_ligase-like_bsu"/>
</dbReference>
<dbReference type="InterPro" id="IPR016102">
    <property type="entry name" value="Succinyl-CoA_synth-like"/>
</dbReference>
<dbReference type="NCBIfam" id="NF001913">
    <property type="entry name" value="PRK00696.1"/>
    <property type="match status" value="1"/>
</dbReference>
<dbReference type="NCBIfam" id="TIGR01016">
    <property type="entry name" value="sucCoAbeta"/>
    <property type="match status" value="1"/>
</dbReference>
<dbReference type="PANTHER" id="PTHR11815:SF10">
    <property type="entry name" value="SUCCINATE--COA LIGASE [GDP-FORMING] SUBUNIT BETA, MITOCHONDRIAL"/>
    <property type="match status" value="1"/>
</dbReference>
<dbReference type="PANTHER" id="PTHR11815">
    <property type="entry name" value="SUCCINYL-COA SYNTHETASE BETA CHAIN"/>
    <property type="match status" value="1"/>
</dbReference>
<dbReference type="Pfam" id="PF08442">
    <property type="entry name" value="ATP-grasp_2"/>
    <property type="match status" value="1"/>
</dbReference>
<dbReference type="Pfam" id="PF00549">
    <property type="entry name" value="Ligase_CoA"/>
    <property type="match status" value="1"/>
</dbReference>
<dbReference type="PIRSF" id="PIRSF001554">
    <property type="entry name" value="SucCS_beta"/>
    <property type="match status" value="1"/>
</dbReference>
<dbReference type="SUPFAM" id="SSF56059">
    <property type="entry name" value="Glutathione synthetase ATP-binding domain-like"/>
    <property type="match status" value="1"/>
</dbReference>
<dbReference type="SUPFAM" id="SSF52210">
    <property type="entry name" value="Succinyl-CoA synthetase domains"/>
    <property type="match status" value="1"/>
</dbReference>
<dbReference type="PROSITE" id="PS50975">
    <property type="entry name" value="ATP_GRASP"/>
    <property type="match status" value="1"/>
</dbReference>
<dbReference type="PROSITE" id="PS01217">
    <property type="entry name" value="SUCCINYL_COA_LIG_3"/>
    <property type="match status" value="1"/>
</dbReference>
<feature type="chain" id="PRO_1000197719" description="Succinate--CoA ligase [ADP-forming] subunit beta">
    <location>
        <begin position="1"/>
        <end position="388"/>
    </location>
</feature>
<feature type="domain" description="ATP-grasp" evidence="1">
    <location>
        <begin position="9"/>
        <end position="244"/>
    </location>
</feature>
<feature type="binding site" evidence="1">
    <location>
        <position position="46"/>
    </location>
    <ligand>
        <name>ATP</name>
        <dbReference type="ChEBI" id="CHEBI:30616"/>
    </ligand>
</feature>
<feature type="binding site" evidence="1">
    <location>
        <begin position="53"/>
        <end position="55"/>
    </location>
    <ligand>
        <name>ATP</name>
        <dbReference type="ChEBI" id="CHEBI:30616"/>
    </ligand>
</feature>
<feature type="binding site" evidence="1">
    <location>
        <position position="99"/>
    </location>
    <ligand>
        <name>ATP</name>
        <dbReference type="ChEBI" id="CHEBI:30616"/>
    </ligand>
</feature>
<feature type="binding site" evidence="1">
    <location>
        <position position="102"/>
    </location>
    <ligand>
        <name>ATP</name>
        <dbReference type="ChEBI" id="CHEBI:30616"/>
    </ligand>
</feature>
<feature type="binding site" evidence="1">
    <location>
        <position position="107"/>
    </location>
    <ligand>
        <name>ATP</name>
        <dbReference type="ChEBI" id="CHEBI:30616"/>
    </ligand>
</feature>
<feature type="binding site" evidence="1">
    <location>
        <position position="199"/>
    </location>
    <ligand>
        <name>Mg(2+)</name>
        <dbReference type="ChEBI" id="CHEBI:18420"/>
    </ligand>
</feature>
<feature type="binding site" evidence="1">
    <location>
        <position position="213"/>
    </location>
    <ligand>
        <name>Mg(2+)</name>
        <dbReference type="ChEBI" id="CHEBI:18420"/>
    </ligand>
</feature>
<feature type="binding site" evidence="1">
    <location>
        <position position="264"/>
    </location>
    <ligand>
        <name>substrate</name>
        <note>ligand shared with subunit alpha</note>
    </ligand>
</feature>
<feature type="binding site" evidence="1">
    <location>
        <begin position="321"/>
        <end position="323"/>
    </location>
    <ligand>
        <name>substrate</name>
        <note>ligand shared with subunit alpha</note>
    </ligand>
</feature>
<reference key="1">
    <citation type="submission" date="2009-02" db="EMBL/GenBank/DDBJ databases">
        <title>Vibrio splendidus str. LGP32 complete genome.</title>
        <authorList>
            <person name="Mazel D."/>
            <person name="Le Roux F."/>
        </authorList>
    </citation>
    <scope>NUCLEOTIDE SEQUENCE [LARGE SCALE GENOMIC DNA]</scope>
    <source>
        <strain>LGP32</strain>
    </source>
</reference>
<keyword id="KW-0067">ATP-binding</keyword>
<keyword id="KW-0436">Ligase</keyword>
<keyword id="KW-0460">Magnesium</keyword>
<keyword id="KW-0479">Metal-binding</keyword>
<keyword id="KW-0547">Nucleotide-binding</keyword>
<keyword id="KW-0816">Tricarboxylic acid cycle</keyword>
<comment type="function">
    <text evidence="1">Succinyl-CoA synthetase functions in the citric acid cycle (TCA), coupling the hydrolysis of succinyl-CoA to the synthesis of either ATP or GTP and thus represents the only step of substrate-level phosphorylation in the TCA. The beta subunit provides nucleotide specificity of the enzyme and binds the substrate succinate, while the binding sites for coenzyme A and phosphate are found in the alpha subunit.</text>
</comment>
<comment type="catalytic activity">
    <reaction evidence="1">
        <text>succinate + ATP + CoA = succinyl-CoA + ADP + phosphate</text>
        <dbReference type="Rhea" id="RHEA:17661"/>
        <dbReference type="ChEBI" id="CHEBI:30031"/>
        <dbReference type="ChEBI" id="CHEBI:30616"/>
        <dbReference type="ChEBI" id="CHEBI:43474"/>
        <dbReference type="ChEBI" id="CHEBI:57287"/>
        <dbReference type="ChEBI" id="CHEBI:57292"/>
        <dbReference type="ChEBI" id="CHEBI:456216"/>
        <dbReference type="EC" id="6.2.1.5"/>
    </reaction>
    <physiologicalReaction direction="right-to-left" evidence="1">
        <dbReference type="Rhea" id="RHEA:17663"/>
    </physiologicalReaction>
</comment>
<comment type="catalytic activity">
    <reaction evidence="1">
        <text>GTP + succinate + CoA = succinyl-CoA + GDP + phosphate</text>
        <dbReference type="Rhea" id="RHEA:22120"/>
        <dbReference type="ChEBI" id="CHEBI:30031"/>
        <dbReference type="ChEBI" id="CHEBI:37565"/>
        <dbReference type="ChEBI" id="CHEBI:43474"/>
        <dbReference type="ChEBI" id="CHEBI:57287"/>
        <dbReference type="ChEBI" id="CHEBI:57292"/>
        <dbReference type="ChEBI" id="CHEBI:58189"/>
    </reaction>
    <physiologicalReaction direction="right-to-left" evidence="1">
        <dbReference type="Rhea" id="RHEA:22122"/>
    </physiologicalReaction>
</comment>
<comment type="cofactor">
    <cofactor evidence="1">
        <name>Mg(2+)</name>
        <dbReference type="ChEBI" id="CHEBI:18420"/>
    </cofactor>
    <text evidence="1">Binds 1 Mg(2+) ion per subunit.</text>
</comment>
<comment type="pathway">
    <text evidence="1">Carbohydrate metabolism; tricarboxylic acid cycle; succinate from succinyl-CoA (ligase route): step 1/1.</text>
</comment>
<comment type="subunit">
    <text evidence="1">Heterotetramer of two alpha and two beta subunits.</text>
</comment>
<comment type="similarity">
    <text evidence="1">Belongs to the succinate/malate CoA ligase beta subunit family.</text>
</comment>
<sequence length="388" mass="41516">MNLHEYQAKQLFAEFGLPVPEGFACDTAQEAFEAAGRISTAKKVVKCQVHAGGRGKAGGVELHDTKEGVKEFAQKWLGKNLVTYQTDANGQPVTKILVEEASNIANELYLGAVVDRATRKIVFMASTEGGVDIEKIAEETPELIHQSAIDPLVGPQAYQGRELAFKLGLVGDQIKQFVKIFMGLGQMFSQYDLALLEINPLVITGEGNLLCLDGKINIDSNAMYRQPKLREMHDPSQEDEREAHAAQWELNYVALDGNVGCMVNGAGLAMGTMDIVNLHGGKPANFLDVGGGATKERVAEAFKIILSDDNVKAVLVNIFGGIVRCDMIAEGIIGAVKEVGVTVPVVVRLEGTNADLGREVLANSDVDIIAAVSLTDAAQKVVAAAEAK</sequence>
<accession>B7VI35</accession>
<gene>
    <name evidence="1" type="primary">sucC</name>
    <name type="ordered locus">VS_2241</name>
</gene>
<evidence type="ECO:0000255" key="1">
    <source>
        <dbReference type="HAMAP-Rule" id="MF_00558"/>
    </source>
</evidence>